<keyword id="KW-0460">Magnesium</keyword>
<keyword id="KW-0464">Manganese</keyword>
<keyword id="KW-0474">Menaquinone biosynthesis</keyword>
<keyword id="KW-0479">Metal-binding</keyword>
<keyword id="KW-1185">Reference proteome</keyword>
<keyword id="KW-0786">Thiamine pyrophosphate</keyword>
<keyword id="KW-0808">Transferase</keyword>
<sequence>MSISTFNRCWSKVILETLVRHNVKHVCIAPGSRSTPLTLEAVRLQERGEVRCHTHFDERGLGFLALGMAKSTNSPVAVIVTSGTAAANLYPAIIEARQSGEKLIVLTADRPAELLECGANQAILQENMFASYPVATVNLPKPGQNYAAKWLISTLDQACHSQLVEKGVVHINVPFAEPLYEANVTEIDEHVWLGPVRRWLGQHKKWTEYQEPQLEVLMHEHWDDWRTKRGVIVAGKLPQGHGMGLKLWAETMGWVLLTDVQSGVEPTLPYADIWLANKTVREKLLQADLVVQLGAHFVSKRINQFLSDFKGEFWVVDESPKRLDPYHHIQTRFNAKAHLWLRAHPPLRQKPWLLEAMALSNFCSSFIEQQVGGSLNEASLAHHIERAFPKNAALFLGNSLFVRLVDALTKRTENYPIYTNRGASGIDGLIATAVGVGIGANQAVAAVVGDMSALYDLNSLALLKKVTQPFVLFVINNNGGAIFDMLPVEAEAKNAYYRLPHNLGFAEAASVFDLKYARPYTWADLGSVLKQAYMRKEATVIEIKAGPNDATNLYKRLLEQISFAVIGA</sequence>
<organism>
    <name type="scientific">Actinobacillus succinogenes (strain ATCC 55618 / DSM 22257 / CCUG 43843 / 130Z)</name>
    <dbReference type="NCBI Taxonomy" id="339671"/>
    <lineage>
        <taxon>Bacteria</taxon>
        <taxon>Pseudomonadati</taxon>
        <taxon>Pseudomonadota</taxon>
        <taxon>Gammaproteobacteria</taxon>
        <taxon>Pasteurellales</taxon>
        <taxon>Pasteurellaceae</taxon>
        <taxon>Actinobacillus</taxon>
    </lineage>
</organism>
<name>MEND_ACTSZ</name>
<comment type="function">
    <text evidence="1">Catalyzes the thiamine diphosphate-dependent decarboxylation of 2-oxoglutarate and the subsequent addition of the resulting succinic semialdehyde-thiamine pyrophosphate anion to isochorismate to yield 2-succinyl-5-enolpyruvyl-6-hydroxy-3-cyclohexene-1-carboxylate (SEPHCHC).</text>
</comment>
<comment type="catalytic activity">
    <reaction evidence="1">
        <text>isochorismate + 2-oxoglutarate + H(+) = 5-enolpyruvoyl-6-hydroxy-2-succinyl-cyclohex-3-ene-1-carboxylate + CO2</text>
        <dbReference type="Rhea" id="RHEA:25593"/>
        <dbReference type="ChEBI" id="CHEBI:15378"/>
        <dbReference type="ChEBI" id="CHEBI:16526"/>
        <dbReference type="ChEBI" id="CHEBI:16810"/>
        <dbReference type="ChEBI" id="CHEBI:29780"/>
        <dbReference type="ChEBI" id="CHEBI:58818"/>
        <dbReference type="EC" id="2.2.1.9"/>
    </reaction>
</comment>
<comment type="cofactor">
    <cofactor evidence="1">
        <name>Mg(2+)</name>
        <dbReference type="ChEBI" id="CHEBI:18420"/>
    </cofactor>
    <cofactor evidence="1">
        <name>Mn(2+)</name>
        <dbReference type="ChEBI" id="CHEBI:29035"/>
    </cofactor>
</comment>
<comment type="cofactor">
    <cofactor evidence="1">
        <name>thiamine diphosphate</name>
        <dbReference type="ChEBI" id="CHEBI:58937"/>
    </cofactor>
    <text evidence="1">Binds 1 thiamine pyrophosphate per subunit.</text>
</comment>
<comment type="pathway">
    <text evidence="1">Quinol/quinone metabolism; 1,4-dihydroxy-2-naphthoate biosynthesis; 1,4-dihydroxy-2-naphthoate from chorismate: step 2/7.</text>
</comment>
<comment type="pathway">
    <text evidence="1">Quinol/quinone metabolism; menaquinone biosynthesis.</text>
</comment>
<comment type="subunit">
    <text evidence="1">Homodimer.</text>
</comment>
<comment type="similarity">
    <text evidence="1">Belongs to the TPP enzyme family. MenD subfamily.</text>
</comment>
<feature type="chain" id="PRO_0000341696" description="2-succinyl-5-enolpyruvyl-6-hydroxy-3-cyclohexene-1-carboxylate synthase">
    <location>
        <begin position="1"/>
        <end position="568"/>
    </location>
</feature>
<gene>
    <name evidence="1" type="primary">menD</name>
    <name type="ordered locus">Asuc_0785</name>
</gene>
<protein>
    <recommendedName>
        <fullName evidence="1">2-succinyl-5-enolpyruvyl-6-hydroxy-3-cyclohexene-1-carboxylate synthase</fullName>
        <shortName evidence="1">SEPHCHC synthase</shortName>
        <ecNumber evidence="1">2.2.1.9</ecNumber>
    </recommendedName>
    <alternativeName>
        <fullName evidence="1">Menaquinone biosynthesis protein MenD</fullName>
    </alternativeName>
</protein>
<proteinExistence type="inferred from homology"/>
<dbReference type="EC" id="2.2.1.9" evidence="1"/>
<dbReference type="EMBL" id="CP000746">
    <property type="protein sequence ID" value="ABR74155.1"/>
    <property type="molecule type" value="Genomic_DNA"/>
</dbReference>
<dbReference type="RefSeq" id="WP_012072533.1">
    <property type="nucleotide sequence ID" value="NC_009655.1"/>
</dbReference>
<dbReference type="SMR" id="A6VMF8"/>
<dbReference type="STRING" id="339671.Asuc_0785"/>
<dbReference type="KEGG" id="asu:Asuc_0785"/>
<dbReference type="eggNOG" id="COG1165">
    <property type="taxonomic scope" value="Bacteria"/>
</dbReference>
<dbReference type="HOGENOM" id="CLU_006051_3_0_6"/>
<dbReference type="OrthoDB" id="9791859at2"/>
<dbReference type="UniPathway" id="UPA00079"/>
<dbReference type="UniPathway" id="UPA01057">
    <property type="reaction ID" value="UER00164"/>
</dbReference>
<dbReference type="Proteomes" id="UP000001114">
    <property type="component" value="Chromosome"/>
</dbReference>
<dbReference type="GO" id="GO:0070204">
    <property type="term" value="F:2-succinyl-5-enolpyruvyl-6-hydroxy-3-cyclohexene-1-carboxylic-acid synthase activity"/>
    <property type="evidence" value="ECO:0007669"/>
    <property type="project" value="UniProtKB-UniRule"/>
</dbReference>
<dbReference type="GO" id="GO:0000287">
    <property type="term" value="F:magnesium ion binding"/>
    <property type="evidence" value="ECO:0007669"/>
    <property type="project" value="UniProtKB-UniRule"/>
</dbReference>
<dbReference type="GO" id="GO:0030145">
    <property type="term" value="F:manganese ion binding"/>
    <property type="evidence" value="ECO:0007669"/>
    <property type="project" value="UniProtKB-UniRule"/>
</dbReference>
<dbReference type="GO" id="GO:0030976">
    <property type="term" value="F:thiamine pyrophosphate binding"/>
    <property type="evidence" value="ECO:0007669"/>
    <property type="project" value="UniProtKB-UniRule"/>
</dbReference>
<dbReference type="GO" id="GO:0009234">
    <property type="term" value="P:menaquinone biosynthetic process"/>
    <property type="evidence" value="ECO:0007669"/>
    <property type="project" value="UniProtKB-UniRule"/>
</dbReference>
<dbReference type="CDD" id="cd07037">
    <property type="entry name" value="TPP_PYR_MenD"/>
    <property type="match status" value="1"/>
</dbReference>
<dbReference type="CDD" id="cd02009">
    <property type="entry name" value="TPP_SHCHC_synthase"/>
    <property type="match status" value="1"/>
</dbReference>
<dbReference type="Gene3D" id="3.40.50.970">
    <property type="match status" value="2"/>
</dbReference>
<dbReference type="Gene3D" id="3.40.50.1220">
    <property type="entry name" value="TPP-binding domain"/>
    <property type="match status" value="1"/>
</dbReference>
<dbReference type="HAMAP" id="MF_01659">
    <property type="entry name" value="MenD"/>
    <property type="match status" value="1"/>
</dbReference>
<dbReference type="InterPro" id="IPR004433">
    <property type="entry name" value="MenaQ_synth_MenD"/>
</dbReference>
<dbReference type="InterPro" id="IPR032264">
    <property type="entry name" value="MenD_middle"/>
</dbReference>
<dbReference type="InterPro" id="IPR029061">
    <property type="entry name" value="THDP-binding"/>
</dbReference>
<dbReference type="InterPro" id="IPR012001">
    <property type="entry name" value="Thiamin_PyroP_enz_TPP-bd_dom"/>
</dbReference>
<dbReference type="InterPro" id="IPR011766">
    <property type="entry name" value="TPP_enzyme_TPP-bd"/>
</dbReference>
<dbReference type="NCBIfam" id="TIGR00173">
    <property type="entry name" value="menD"/>
    <property type="match status" value="1"/>
</dbReference>
<dbReference type="PANTHER" id="PTHR42916">
    <property type="entry name" value="2-SUCCINYL-5-ENOLPYRUVYL-6-HYDROXY-3-CYCLOHEXENE-1-CARBOXYLATE SYNTHASE"/>
    <property type="match status" value="1"/>
</dbReference>
<dbReference type="PANTHER" id="PTHR42916:SF1">
    <property type="entry name" value="PROTEIN PHYLLO, CHLOROPLASTIC"/>
    <property type="match status" value="1"/>
</dbReference>
<dbReference type="Pfam" id="PF02775">
    <property type="entry name" value="TPP_enzyme_C"/>
    <property type="match status" value="1"/>
</dbReference>
<dbReference type="Pfam" id="PF16582">
    <property type="entry name" value="TPP_enzyme_M_2"/>
    <property type="match status" value="1"/>
</dbReference>
<dbReference type="Pfam" id="PF02776">
    <property type="entry name" value="TPP_enzyme_N"/>
    <property type="match status" value="1"/>
</dbReference>
<dbReference type="PIRSF" id="PIRSF004983">
    <property type="entry name" value="MenD"/>
    <property type="match status" value="1"/>
</dbReference>
<dbReference type="SUPFAM" id="SSF52518">
    <property type="entry name" value="Thiamin diphosphate-binding fold (THDP-binding)"/>
    <property type="match status" value="2"/>
</dbReference>
<evidence type="ECO:0000255" key="1">
    <source>
        <dbReference type="HAMAP-Rule" id="MF_01659"/>
    </source>
</evidence>
<reference key="1">
    <citation type="journal article" date="2010" name="BMC Genomics">
        <title>A genomic perspective on the potential of Actinobacillus succinogenes for industrial succinate production.</title>
        <authorList>
            <person name="McKinlay J.B."/>
            <person name="Laivenieks M."/>
            <person name="Schindler B.D."/>
            <person name="McKinlay A.A."/>
            <person name="Siddaramappa S."/>
            <person name="Challacombe J.F."/>
            <person name="Lowry S.R."/>
            <person name="Clum A."/>
            <person name="Lapidus A.L."/>
            <person name="Burkhart K.B."/>
            <person name="Harkins V."/>
            <person name="Vieille C."/>
        </authorList>
    </citation>
    <scope>NUCLEOTIDE SEQUENCE [LARGE SCALE GENOMIC DNA]</scope>
    <source>
        <strain>ATCC 55618 / DSM 22257 / CCUG 43843 / 130Z</strain>
    </source>
</reference>
<accession>A6VMF8</accession>